<feature type="chain" id="PRO_0000381775" description="Protein adenylyltransferase VopS">
    <location>
        <begin position="1"/>
        <end position="387"/>
    </location>
</feature>
<feature type="domain" description="Fido" evidence="2">
    <location>
        <begin position="278"/>
        <end position="387"/>
    </location>
</feature>
<feature type="binding site" evidence="1">
    <location>
        <begin position="76"/>
        <end position="77"/>
    </location>
    <ligand>
        <name>ATP</name>
        <dbReference type="ChEBI" id="CHEBI:30616"/>
    </ligand>
</feature>
<feature type="binding site" evidence="1">
    <location>
        <begin position="122"/>
        <end position="124"/>
    </location>
    <ligand>
        <name>ATP</name>
        <dbReference type="ChEBI" id="CHEBI:30616"/>
    </ligand>
</feature>
<feature type="binding site" evidence="1">
    <location>
        <begin position="353"/>
        <end position="355"/>
    </location>
    <ligand>
        <name>ATP</name>
        <dbReference type="ChEBI" id="CHEBI:30616"/>
    </ligand>
</feature>
<feature type="binding site" evidence="1">
    <location>
        <position position="359"/>
    </location>
    <ligand>
        <name>ATP</name>
        <dbReference type="ChEBI" id="CHEBI:30616"/>
    </ligand>
</feature>
<feature type="mutagenesis site" description="Abolishes adenylyltransferase activity." evidence="5">
    <original>R</original>
    <variation>A</variation>
    <location>
        <position position="299"/>
    </location>
</feature>
<feature type="mutagenesis site" description="Slight reduction in adenylyltransferase activity." evidence="5">
    <original>L</original>
    <variation>A</variation>
    <location>
        <position position="308"/>
    </location>
</feature>
<feature type="mutagenesis site" description="Abolishes adenylyltransferase activity and its ability to induce cell rounding in host cells." evidence="4 5">
    <original>H</original>
    <variation>A</variation>
    <location>
        <position position="348"/>
    </location>
</feature>
<feature type="mutagenesis site" description="Abolishes adenylyltransferase activity." evidence="5">
    <original>F</original>
    <variation>A</variation>
    <location>
        <position position="350"/>
    </location>
</feature>
<feature type="mutagenesis site" description="Abolishes adenylyltransferase activity." evidence="5">
    <original>D</original>
    <variation>A</variation>
    <location>
        <position position="352"/>
    </location>
</feature>
<feature type="mutagenesis site" description="Abolishes adenylyltransferase activity." evidence="5">
    <original>N</original>
    <variation>A</variation>
    <location>
        <position position="354"/>
    </location>
</feature>
<feature type="mutagenesis site" description="Abolishes adenylyltransferase activity." evidence="5">
    <original>R</original>
    <variation>A</variation>
    <location>
        <position position="356"/>
    </location>
</feature>
<feature type="strand" evidence="6">
    <location>
        <begin position="81"/>
        <end position="83"/>
    </location>
</feature>
<feature type="helix" evidence="6">
    <location>
        <begin position="87"/>
        <end position="91"/>
    </location>
</feature>
<feature type="strand" evidence="6">
    <location>
        <begin position="93"/>
        <end position="95"/>
    </location>
</feature>
<feature type="helix" evidence="6">
    <location>
        <begin position="96"/>
        <end position="103"/>
    </location>
</feature>
<feature type="helix" evidence="6">
    <location>
        <begin position="112"/>
        <end position="118"/>
    </location>
</feature>
<feature type="helix" evidence="6">
    <location>
        <begin position="119"/>
        <end position="121"/>
    </location>
</feature>
<feature type="helix" evidence="6">
    <location>
        <begin position="124"/>
        <end position="129"/>
    </location>
</feature>
<feature type="helix" evidence="6">
    <location>
        <begin position="131"/>
        <end position="148"/>
    </location>
</feature>
<feature type="helix" evidence="6">
    <location>
        <begin position="150"/>
        <end position="159"/>
    </location>
</feature>
<feature type="helix" evidence="6">
    <location>
        <begin position="161"/>
        <end position="175"/>
    </location>
</feature>
<feature type="helix" evidence="6">
    <location>
        <begin position="178"/>
        <end position="184"/>
    </location>
</feature>
<feature type="helix" evidence="6">
    <location>
        <begin position="186"/>
        <end position="212"/>
    </location>
</feature>
<feature type="helix" evidence="6">
    <location>
        <begin position="213"/>
        <end position="216"/>
    </location>
</feature>
<feature type="turn" evidence="6">
    <location>
        <begin position="222"/>
        <end position="225"/>
    </location>
</feature>
<feature type="helix" evidence="6">
    <location>
        <begin position="230"/>
        <end position="233"/>
    </location>
</feature>
<feature type="helix" evidence="6">
    <location>
        <begin position="241"/>
        <end position="252"/>
    </location>
</feature>
<feature type="helix" evidence="6">
    <location>
        <begin position="257"/>
        <end position="272"/>
    </location>
</feature>
<feature type="helix" evidence="6">
    <location>
        <begin position="280"/>
        <end position="290"/>
    </location>
</feature>
<feature type="helix" evidence="6">
    <location>
        <begin position="311"/>
        <end position="323"/>
    </location>
</feature>
<feature type="helix" evidence="6">
    <location>
        <begin position="325"/>
        <end position="328"/>
    </location>
</feature>
<feature type="helix" evidence="6">
    <location>
        <begin position="333"/>
        <end position="347"/>
    </location>
</feature>
<feature type="strand" evidence="6">
    <location>
        <begin position="350"/>
        <end position="352"/>
    </location>
</feature>
<feature type="helix" evidence="6">
    <location>
        <begin position="354"/>
        <end position="368"/>
    </location>
</feature>
<feature type="helix" evidence="6">
    <location>
        <begin position="377"/>
        <end position="384"/>
    </location>
</feature>
<keyword id="KW-0002">3D-structure</keyword>
<keyword id="KW-0067">ATP-binding</keyword>
<keyword id="KW-0547">Nucleotide-binding</keyword>
<keyword id="KW-0548">Nucleotidyltransferase</keyword>
<keyword id="KW-0964">Secreted</keyword>
<keyword id="KW-0808">Transferase</keyword>
<keyword id="KW-0843">Virulence</keyword>
<proteinExistence type="evidence at protein level"/>
<dbReference type="EC" id="2.7.7.108" evidence="4 5"/>
<dbReference type="EMBL" id="BA000031">
    <property type="protein sequence ID" value="BAC59949.1"/>
    <property type="molecule type" value="Genomic_DNA"/>
</dbReference>
<dbReference type="RefSeq" id="NP_798065.1">
    <property type="nucleotide sequence ID" value="NC_004603.1"/>
</dbReference>
<dbReference type="RefSeq" id="WP_005464511.1">
    <property type="nucleotide sequence ID" value="NC_004603.1"/>
</dbReference>
<dbReference type="PDB" id="3LET">
    <property type="method" value="X-ray"/>
    <property type="resolution" value="1.80 A"/>
    <property type="chains" value="A/B=75-387"/>
</dbReference>
<dbReference type="PDBsum" id="3LET"/>
<dbReference type="SMR" id="Q87P32"/>
<dbReference type="GeneID" id="1189193"/>
<dbReference type="KEGG" id="vpa:VP1686"/>
<dbReference type="PATRIC" id="fig|223926.6.peg.1608"/>
<dbReference type="eggNOG" id="COG3177">
    <property type="taxonomic scope" value="Bacteria"/>
</dbReference>
<dbReference type="HOGENOM" id="CLU_739533_0_0_6"/>
<dbReference type="Proteomes" id="UP000002493">
    <property type="component" value="Chromosome 1"/>
</dbReference>
<dbReference type="GO" id="GO:0005576">
    <property type="term" value="C:extracellular region"/>
    <property type="evidence" value="ECO:0007669"/>
    <property type="project" value="UniProtKB-SubCell"/>
</dbReference>
<dbReference type="GO" id="GO:0070733">
    <property type="term" value="F:AMPylase activity"/>
    <property type="evidence" value="ECO:0000314"/>
    <property type="project" value="UniProtKB"/>
</dbReference>
<dbReference type="GO" id="GO:0005524">
    <property type="term" value="F:ATP binding"/>
    <property type="evidence" value="ECO:0007669"/>
    <property type="project" value="UniProtKB-KW"/>
</dbReference>
<dbReference type="GO" id="GO:0031267">
    <property type="term" value="F:small GTPase binding"/>
    <property type="evidence" value="ECO:0000314"/>
    <property type="project" value="BHF-UCL"/>
</dbReference>
<dbReference type="GO" id="GO:0044082">
    <property type="term" value="P:symbiont-mediated perturbation of host small GTPase-mediated signal transduction"/>
    <property type="evidence" value="ECO:0000314"/>
    <property type="project" value="UniProtKB"/>
</dbReference>
<dbReference type="Gene3D" id="1.10.3290.10">
    <property type="entry name" value="Fido-like domain"/>
    <property type="match status" value="1"/>
</dbReference>
<dbReference type="InterPro" id="IPR003812">
    <property type="entry name" value="Fido"/>
</dbReference>
<dbReference type="InterPro" id="IPR036597">
    <property type="entry name" value="Fido-like_dom_sf"/>
</dbReference>
<dbReference type="InterPro" id="IPR049418">
    <property type="entry name" value="VopS_N"/>
</dbReference>
<dbReference type="NCBIfam" id="NF010653">
    <property type="entry name" value="PRK14052.1"/>
    <property type="match status" value="1"/>
</dbReference>
<dbReference type="Pfam" id="PF02661">
    <property type="entry name" value="Fic"/>
    <property type="match status" value="1"/>
</dbReference>
<dbReference type="Pfam" id="PF20793">
    <property type="entry name" value="VopS_N"/>
    <property type="match status" value="1"/>
</dbReference>
<dbReference type="SUPFAM" id="SSF140931">
    <property type="entry name" value="Fic-like"/>
    <property type="match status" value="1"/>
</dbReference>
<dbReference type="PROSITE" id="PS51459">
    <property type="entry name" value="FIDO"/>
    <property type="match status" value="1"/>
</dbReference>
<gene>
    <name type="primary">vopS</name>
    <name type="ordered locus">VP1686</name>
</gene>
<reference key="1">
    <citation type="journal article" date="2003" name="Lancet">
        <title>Genome sequence of Vibrio parahaemolyticus: a pathogenic mechanism distinct from that of V. cholerae.</title>
        <authorList>
            <person name="Makino K."/>
            <person name="Oshima K."/>
            <person name="Kurokawa K."/>
            <person name="Yokoyama K."/>
            <person name="Uda T."/>
            <person name="Tagomori K."/>
            <person name="Iijima Y."/>
            <person name="Najima M."/>
            <person name="Nakano M."/>
            <person name="Yamashita A."/>
            <person name="Kubota Y."/>
            <person name="Kimura S."/>
            <person name="Yasunaga T."/>
            <person name="Honda T."/>
            <person name="Shinagawa H."/>
            <person name="Hattori M."/>
            <person name="Iida T."/>
        </authorList>
    </citation>
    <scope>NUCLEOTIDE SEQUENCE [LARGE SCALE GENOMIC DNA]</scope>
    <source>
        <strain>RIMD 2210633</strain>
    </source>
</reference>
<reference key="2">
    <citation type="journal article" date="2008" name="Infect. Immun.">
        <title>Vibrio parahaemolyticus inhibition of Rho family GTPase activation requires a functional chromosome I type III secretion system.</title>
        <authorList>
            <person name="Casselli T."/>
            <person name="Lynch T."/>
            <person name="Southward C.M."/>
            <person name="Jones B.W."/>
            <person name="DeVinney R."/>
        </authorList>
    </citation>
    <scope>SUBCELLULAR LOCATION</scope>
    <scope>DISRUPTION PHENOTYPE</scope>
</reference>
<reference key="3">
    <citation type="journal article" date="2009" name="Science">
        <title>AMPylation of Rho GTPases by Vibrio VopS disrupts effector binding and downstream signaling.</title>
        <authorList>
            <person name="Yarbrough M.L."/>
            <person name="Li Y."/>
            <person name="Kinch L.N."/>
            <person name="Grishin N.V."/>
            <person name="Ball H.L."/>
            <person name="Orth K."/>
        </authorList>
    </citation>
    <scope>FUNCTION</scope>
    <scope>CATALYTIC ACTIVITY</scope>
    <scope>SUBCELLULAR LOCATION</scope>
    <scope>MUTAGENESIS OF HIS-348</scope>
</reference>
<reference key="4">
    <citation type="journal article" date="2010" name="J. Biol. Chem.">
        <title>Kinetic and structural insights into the mechanism of AMPylation by VopS Fic domain.</title>
        <authorList>
            <person name="Luong P."/>
            <person name="Kinch L.N."/>
            <person name="Brautigam C.A."/>
            <person name="Grishin N.V."/>
            <person name="Tomchick D.R."/>
            <person name="Orth K."/>
        </authorList>
    </citation>
    <scope>X-RAY CRYSTALLOGRAPHY (1.8 ANGSTROMS) OF 75-387</scope>
    <scope>FUNCTION</scope>
    <scope>CATALYTIC ACTIVITY</scope>
    <scope>MUTAGENESIS OF ARG-299; LEU-308; HIS-348; PHE-350; ASP-352; ASN-354 AND ARG-356</scope>
</reference>
<evidence type="ECO:0000250" key="1"/>
<evidence type="ECO:0000255" key="2">
    <source>
        <dbReference type="PROSITE-ProRule" id="PRU00791"/>
    </source>
</evidence>
<evidence type="ECO:0000269" key="3">
    <source>
    </source>
</evidence>
<evidence type="ECO:0000269" key="4">
    <source>
    </source>
</evidence>
<evidence type="ECO:0000269" key="5">
    <source>
    </source>
</evidence>
<evidence type="ECO:0007829" key="6">
    <source>
        <dbReference type="PDB" id="3LET"/>
    </source>
</evidence>
<sequence length="387" mass="41737">MISFGNVSALQAAMPQARNEILNEGKLSIGGKEYTINAATQEFTRANPTSGAVARFFEATGKLFREGSTQSVAKAITKAVFDNEQGQAQRLQTSSSVEHGQMLFKDANLKTPSDVLNAFAKLDSKMVKSHAAELSQLAERAMTEVMLETDSGKNLKALIGDDAVKSLAVRVVKDYGGGVAAAQKNPEVRINQMQAVFDMEVMHLKAAQRHIEGLASTDLNQGVYAEGLPEDAFNKAGVTNNVERAAAWIINASNSKGNDAENITSLLKEYATNGKDLLNMDNLKELHARLVPNVERDYRGPNISGGTLPSSIGGEGMLKQHIEGFLKENPVADKDLGKHLFAGVIGYHGFTDGNGRMGRMLYAIAELRNDSFNPLAMNAENSLHGIK</sequence>
<name>VOPS_VIBPA</name>
<protein>
    <recommendedName>
        <fullName>Protein adenylyltransferase VopS</fullName>
        <ecNumber evidence="4 5">2.7.7.108</ecNumber>
    </recommendedName>
    <alternativeName>
        <fullName>AMPylator VopS</fullName>
    </alternativeName>
    <alternativeName>
        <fullName>Vibrio outer protein S</fullName>
    </alternativeName>
</protein>
<organism>
    <name type="scientific">Vibrio parahaemolyticus serotype O3:K6 (strain RIMD 2210633)</name>
    <dbReference type="NCBI Taxonomy" id="223926"/>
    <lineage>
        <taxon>Bacteria</taxon>
        <taxon>Pseudomonadati</taxon>
        <taxon>Pseudomonadota</taxon>
        <taxon>Gammaproteobacteria</taxon>
        <taxon>Vibrionales</taxon>
        <taxon>Vibrionaceae</taxon>
        <taxon>Vibrio</taxon>
    </lineage>
</organism>
<comment type="function">
    <text evidence="4 5">Adenylyltransferase involved in virulence by mediating the addition of adenosine 5'-monophosphate (AMP) to specific threonine residue of host Rho GTPases RhoA, Rac and Cdc42. The resulting AMPylation prevents the interaction of Rho GTPases with downstream effectors, thereby inhibiting actin assembly in infected cells.</text>
</comment>
<comment type="catalytic activity">
    <reaction evidence="4 5">
        <text>L-tyrosyl-[protein] + ATP = O-(5'-adenylyl)-L-tyrosyl-[protein] + diphosphate</text>
        <dbReference type="Rhea" id="RHEA:54288"/>
        <dbReference type="Rhea" id="RHEA-COMP:10136"/>
        <dbReference type="Rhea" id="RHEA-COMP:13846"/>
        <dbReference type="ChEBI" id="CHEBI:30616"/>
        <dbReference type="ChEBI" id="CHEBI:33019"/>
        <dbReference type="ChEBI" id="CHEBI:46858"/>
        <dbReference type="ChEBI" id="CHEBI:83624"/>
        <dbReference type="EC" id="2.7.7.108"/>
    </reaction>
</comment>
<comment type="catalytic activity">
    <reaction evidence="4 5">
        <text>L-threonyl-[protein] + ATP = 3-O-(5'-adenylyl)-L-threonyl-[protein] + diphosphate</text>
        <dbReference type="Rhea" id="RHEA:54292"/>
        <dbReference type="Rhea" id="RHEA-COMP:11060"/>
        <dbReference type="Rhea" id="RHEA-COMP:13847"/>
        <dbReference type="ChEBI" id="CHEBI:30013"/>
        <dbReference type="ChEBI" id="CHEBI:30616"/>
        <dbReference type="ChEBI" id="CHEBI:33019"/>
        <dbReference type="ChEBI" id="CHEBI:138113"/>
        <dbReference type="EC" id="2.7.7.108"/>
    </reaction>
</comment>
<comment type="biophysicochemical properties">
    <kinetics>
        <KM>160 uM for ATP</KM>
        <KM>180 uM for Cdc42</KM>
    </kinetics>
</comment>
<comment type="subcellular location">
    <subcellularLocation>
        <location evidence="3 4">Secreted</location>
    </subcellularLocation>
    <text>Translocated into the host cell via the type III secretion system (T3SS).</text>
</comment>
<comment type="domain">
    <text>The fido domain mediates the adenylyltransferase activity.</text>
</comment>
<comment type="disruption phenotype">
    <text evidence="3">Abolishes the ability to inhibit host Rho family GTPases and cause cytoskeletal disruption.</text>
</comment>
<accession>Q87P32</accession>